<name>GATC_DESAL</name>
<keyword id="KW-0067">ATP-binding</keyword>
<keyword id="KW-0436">Ligase</keyword>
<keyword id="KW-0547">Nucleotide-binding</keyword>
<keyword id="KW-0648">Protein biosynthesis</keyword>
<keyword id="KW-1185">Reference proteome</keyword>
<accession>B8FCL0</accession>
<protein>
    <recommendedName>
        <fullName evidence="1">Aspartyl/glutamyl-tRNA(Asn/Gln) amidotransferase subunit C</fullName>
        <shortName evidence="1">Asp/Glu-ADT subunit C</shortName>
        <ecNumber evidence="1">6.3.5.-</ecNumber>
    </recommendedName>
</protein>
<organism>
    <name type="scientific">Desulfatibacillum aliphaticivorans</name>
    <dbReference type="NCBI Taxonomy" id="218208"/>
    <lineage>
        <taxon>Bacteria</taxon>
        <taxon>Pseudomonadati</taxon>
        <taxon>Thermodesulfobacteriota</taxon>
        <taxon>Desulfobacteria</taxon>
        <taxon>Desulfobacterales</taxon>
        <taxon>Desulfatibacillaceae</taxon>
        <taxon>Desulfatibacillum</taxon>
    </lineage>
</organism>
<proteinExistence type="inferred from homology"/>
<evidence type="ECO:0000255" key="1">
    <source>
        <dbReference type="HAMAP-Rule" id="MF_00122"/>
    </source>
</evidence>
<sequence length="94" mass="10469">MKISEEEVRHVAKLARLNLTDEEVAMFSRQVGDILDYVDQLNTVDTEGVEGASHAISVNNAFREDKVKDSMDPDLALSNAPEREDTDIIVPKVI</sequence>
<gene>
    <name evidence="1" type="primary">gatC</name>
    <name type="ordered locus">Dalk_4494</name>
</gene>
<dbReference type="EC" id="6.3.5.-" evidence="1"/>
<dbReference type="EMBL" id="CP001322">
    <property type="protein sequence ID" value="ACL06173.1"/>
    <property type="molecule type" value="Genomic_DNA"/>
</dbReference>
<dbReference type="RefSeq" id="WP_015949219.1">
    <property type="nucleotide sequence ID" value="NC_011768.1"/>
</dbReference>
<dbReference type="SMR" id="B8FCL0"/>
<dbReference type="KEGG" id="dal:Dalk_4494"/>
<dbReference type="eggNOG" id="COG0721">
    <property type="taxonomic scope" value="Bacteria"/>
</dbReference>
<dbReference type="HOGENOM" id="CLU_105899_6_1_7"/>
<dbReference type="Proteomes" id="UP000000739">
    <property type="component" value="Chromosome"/>
</dbReference>
<dbReference type="GO" id="GO:0050566">
    <property type="term" value="F:asparaginyl-tRNA synthase (glutamine-hydrolyzing) activity"/>
    <property type="evidence" value="ECO:0007669"/>
    <property type="project" value="RHEA"/>
</dbReference>
<dbReference type="GO" id="GO:0005524">
    <property type="term" value="F:ATP binding"/>
    <property type="evidence" value="ECO:0007669"/>
    <property type="project" value="UniProtKB-KW"/>
</dbReference>
<dbReference type="GO" id="GO:0050567">
    <property type="term" value="F:glutaminyl-tRNA synthase (glutamine-hydrolyzing) activity"/>
    <property type="evidence" value="ECO:0007669"/>
    <property type="project" value="UniProtKB-UniRule"/>
</dbReference>
<dbReference type="GO" id="GO:0070681">
    <property type="term" value="P:glutaminyl-tRNAGln biosynthesis via transamidation"/>
    <property type="evidence" value="ECO:0007669"/>
    <property type="project" value="TreeGrafter"/>
</dbReference>
<dbReference type="GO" id="GO:0006450">
    <property type="term" value="P:regulation of translational fidelity"/>
    <property type="evidence" value="ECO:0007669"/>
    <property type="project" value="InterPro"/>
</dbReference>
<dbReference type="GO" id="GO:0006412">
    <property type="term" value="P:translation"/>
    <property type="evidence" value="ECO:0007669"/>
    <property type="project" value="UniProtKB-UniRule"/>
</dbReference>
<dbReference type="Gene3D" id="1.10.20.60">
    <property type="entry name" value="Glu-tRNAGln amidotransferase C subunit, N-terminal domain"/>
    <property type="match status" value="1"/>
</dbReference>
<dbReference type="HAMAP" id="MF_00122">
    <property type="entry name" value="GatC"/>
    <property type="match status" value="1"/>
</dbReference>
<dbReference type="InterPro" id="IPR036113">
    <property type="entry name" value="Asp/Glu-ADT_sf_sub_c"/>
</dbReference>
<dbReference type="InterPro" id="IPR003837">
    <property type="entry name" value="GatC"/>
</dbReference>
<dbReference type="NCBIfam" id="TIGR00135">
    <property type="entry name" value="gatC"/>
    <property type="match status" value="1"/>
</dbReference>
<dbReference type="PANTHER" id="PTHR15004">
    <property type="entry name" value="GLUTAMYL-TRNA(GLN) AMIDOTRANSFERASE SUBUNIT C, MITOCHONDRIAL"/>
    <property type="match status" value="1"/>
</dbReference>
<dbReference type="PANTHER" id="PTHR15004:SF0">
    <property type="entry name" value="GLUTAMYL-TRNA(GLN) AMIDOTRANSFERASE SUBUNIT C, MITOCHONDRIAL"/>
    <property type="match status" value="1"/>
</dbReference>
<dbReference type="Pfam" id="PF02686">
    <property type="entry name" value="GatC"/>
    <property type="match status" value="1"/>
</dbReference>
<dbReference type="SUPFAM" id="SSF141000">
    <property type="entry name" value="Glu-tRNAGln amidotransferase C subunit"/>
    <property type="match status" value="1"/>
</dbReference>
<reference key="1">
    <citation type="journal article" date="2012" name="Environ. Microbiol.">
        <title>The genome sequence of Desulfatibacillum alkenivorans AK-01: a blueprint for anaerobic alkane oxidation.</title>
        <authorList>
            <person name="Callaghan A.V."/>
            <person name="Morris B.E."/>
            <person name="Pereira I.A."/>
            <person name="McInerney M.J."/>
            <person name="Austin R.N."/>
            <person name="Groves J.T."/>
            <person name="Kukor J.J."/>
            <person name="Suflita J.M."/>
            <person name="Young L.Y."/>
            <person name="Zylstra G.J."/>
            <person name="Wawrik B."/>
        </authorList>
    </citation>
    <scope>NUCLEOTIDE SEQUENCE [LARGE SCALE GENOMIC DNA]</scope>
    <source>
        <strain>AK-01</strain>
    </source>
</reference>
<feature type="chain" id="PRO_1000117632" description="Aspartyl/glutamyl-tRNA(Asn/Gln) amidotransferase subunit C">
    <location>
        <begin position="1"/>
        <end position="94"/>
    </location>
</feature>
<comment type="function">
    <text evidence="1">Allows the formation of correctly charged Asn-tRNA(Asn) or Gln-tRNA(Gln) through the transamidation of misacylated Asp-tRNA(Asn) or Glu-tRNA(Gln) in organisms which lack either or both of asparaginyl-tRNA or glutaminyl-tRNA synthetases. The reaction takes place in the presence of glutamine and ATP through an activated phospho-Asp-tRNA(Asn) or phospho-Glu-tRNA(Gln).</text>
</comment>
<comment type="catalytic activity">
    <reaction evidence="1">
        <text>L-glutamyl-tRNA(Gln) + L-glutamine + ATP + H2O = L-glutaminyl-tRNA(Gln) + L-glutamate + ADP + phosphate + H(+)</text>
        <dbReference type="Rhea" id="RHEA:17521"/>
        <dbReference type="Rhea" id="RHEA-COMP:9681"/>
        <dbReference type="Rhea" id="RHEA-COMP:9684"/>
        <dbReference type="ChEBI" id="CHEBI:15377"/>
        <dbReference type="ChEBI" id="CHEBI:15378"/>
        <dbReference type="ChEBI" id="CHEBI:29985"/>
        <dbReference type="ChEBI" id="CHEBI:30616"/>
        <dbReference type="ChEBI" id="CHEBI:43474"/>
        <dbReference type="ChEBI" id="CHEBI:58359"/>
        <dbReference type="ChEBI" id="CHEBI:78520"/>
        <dbReference type="ChEBI" id="CHEBI:78521"/>
        <dbReference type="ChEBI" id="CHEBI:456216"/>
    </reaction>
</comment>
<comment type="catalytic activity">
    <reaction evidence="1">
        <text>L-aspartyl-tRNA(Asn) + L-glutamine + ATP + H2O = L-asparaginyl-tRNA(Asn) + L-glutamate + ADP + phosphate + 2 H(+)</text>
        <dbReference type="Rhea" id="RHEA:14513"/>
        <dbReference type="Rhea" id="RHEA-COMP:9674"/>
        <dbReference type="Rhea" id="RHEA-COMP:9677"/>
        <dbReference type="ChEBI" id="CHEBI:15377"/>
        <dbReference type="ChEBI" id="CHEBI:15378"/>
        <dbReference type="ChEBI" id="CHEBI:29985"/>
        <dbReference type="ChEBI" id="CHEBI:30616"/>
        <dbReference type="ChEBI" id="CHEBI:43474"/>
        <dbReference type="ChEBI" id="CHEBI:58359"/>
        <dbReference type="ChEBI" id="CHEBI:78515"/>
        <dbReference type="ChEBI" id="CHEBI:78516"/>
        <dbReference type="ChEBI" id="CHEBI:456216"/>
    </reaction>
</comment>
<comment type="subunit">
    <text evidence="1">Heterotrimer of A, B and C subunits.</text>
</comment>
<comment type="similarity">
    <text evidence="1">Belongs to the GatC family.</text>
</comment>